<reference key="1">
    <citation type="journal article" date="2008" name="PLoS Genet.">
        <title>Genomic islands in the pathogenic filamentous fungus Aspergillus fumigatus.</title>
        <authorList>
            <person name="Fedorova N.D."/>
            <person name="Khaldi N."/>
            <person name="Joardar V.S."/>
            <person name="Maiti R."/>
            <person name="Amedeo P."/>
            <person name="Anderson M.J."/>
            <person name="Crabtree J."/>
            <person name="Silva J.C."/>
            <person name="Badger J.H."/>
            <person name="Albarraq A."/>
            <person name="Angiuoli S."/>
            <person name="Bussey H."/>
            <person name="Bowyer P."/>
            <person name="Cotty P.J."/>
            <person name="Dyer P.S."/>
            <person name="Egan A."/>
            <person name="Galens K."/>
            <person name="Fraser-Liggett C.M."/>
            <person name="Haas B.J."/>
            <person name="Inman J.M."/>
            <person name="Kent R."/>
            <person name="Lemieux S."/>
            <person name="Malavazi I."/>
            <person name="Orvis J."/>
            <person name="Roemer T."/>
            <person name="Ronning C.M."/>
            <person name="Sundaram J.P."/>
            <person name="Sutton G."/>
            <person name="Turner G."/>
            <person name="Venter J.C."/>
            <person name="White O.R."/>
            <person name="Whitty B.R."/>
            <person name="Youngman P."/>
            <person name="Wolfe K.H."/>
            <person name="Goldman G.H."/>
            <person name="Wortman J.R."/>
            <person name="Jiang B."/>
            <person name="Denning D.W."/>
            <person name="Nierman W.C."/>
        </authorList>
    </citation>
    <scope>NUCLEOTIDE SEQUENCE [LARGE SCALE GENOMIC DNA]</scope>
    <source>
        <strain>CBS 144.89 / FGSC A1163 / CEA10</strain>
    </source>
</reference>
<accession>B0Y4Q5</accession>
<protein>
    <recommendedName>
        <fullName>Golgi apparatus membrane protein tvp38</fullName>
    </recommendedName>
</protein>
<evidence type="ECO:0000250" key="1">
    <source>
        <dbReference type="UniProtKB" id="P36164"/>
    </source>
</evidence>
<evidence type="ECO:0000255" key="2"/>
<evidence type="ECO:0000256" key="3">
    <source>
        <dbReference type="SAM" id="MobiDB-lite"/>
    </source>
</evidence>
<evidence type="ECO:0000305" key="4"/>
<feature type="chain" id="PRO_0000343061" description="Golgi apparatus membrane protein tvp38">
    <location>
        <begin position="1"/>
        <end position="418"/>
    </location>
</feature>
<feature type="topological domain" description="Lumenal" evidence="2">
    <location>
        <begin position="1"/>
        <end position="81"/>
    </location>
</feature>
<feature type="transmembrane region" description="Helical" evidence="2">
    <location>
        <begin position="82"/>
        <end position="102"/>
    </location>
</feature>
<feature type="topological domain" description="Cytoplasmic" evidence="2">
    <location>
        <begin position="103"/>
        <end position="119"/>
    </location>
</feature>
<feature type="transmembrane region" description="Helical" evidence="2">
    <location>
        <begin position="120"/>
        <end position="140"/>
    </location>
</feature>
<feature type="topological domain" description="Lumenal" evidence="2">
    <location>
        <begin position="141"/>
        <end position="157"/>
    </location>
</feature>
<feature type="transmembrane region" description="Helical" evidence="2">
    <location>
        <begin position="158"/>
        <end position="180"/>
    </location>
</feature>
<feature type="topological domain" description="Cytoplasmic" evidence="2">
    <location>
        <begin position="181"/>
        <end position="234"/>
    </location>
</feature>
<feature type="transmembrane region" description="Helical" evidence="2">
    <location>
        <begin position="235"/>
        <end position="255"/>
    </location>
</feature>
<feature type="topological domain" description="Lumenal" evidence="2">
    <location>
        <begin position="256"/>
        <end position="273"/>
    </location>
</feature>
<feature type="transmembrane region" description="Helical" evidence="2">
    <location>
        <begin position="274"/>
        <end position="294"/>
    </location>
</feature>
<feature type="topological domain" description="Cytoplasmic" evidence="2">
    <location>
        <begin position="295"/>
        <end position="418"/>
    </location>
</feature>
<feature type="region of interest" description="Disordered" evidence="3">
    <location>
        <begin position="1"/>
        <end position="26"/>
    </location>
</feature>
<feature type="region of interest" description="VTT domain" evidence="1">
    <location>
        <begin position="149"/>
        <end position="258"/>
    </location>
</feature>
<feature type="region of interest" description="Disordered" evidence="3">
    <location>
        <begin position="367"/>
        <end position="388"/>
    </location>
</feature>
<feature type="compositionally biased region" description="Polar residues" evidence="3">
    <location>
        <begin position="1"/>
        <end position="10"/>
    </location>
</feature>
<gene>
    <name type="primary">tvp38</name>
    <name type="ORF">AFUB_069910</name>
</gene>
<comment type="function">
    <text>Golgi membrane protein involved in vesicular trafficking and spindle migration.</text>
</comment>
<comment type="subcellular location">
    <subcellularLocation>
        <location>Golgi apparatus membrane</location>
        <topology>Multi-pass membrane protein</topology>
    </subcellularLocation>
</comment>
<comment type="domain">
    <text evidence="1">The VTT domain was previously called the SNARE-assoc domain. As there is no evidence that this domain associates with SNARE proteins, it was renamed as VMP1, TMEM41, and TVP38 (VTT) domain.</text>
</comment>
<comment type="similarity">
    <text evidence="4">Belongs to the TVP38/TMEM64 family.</text>
</comment>
<name>TVP38_ASPFC</name>
<proteinExistence type="inferred from homology"/>
<organism>
    <name type="scientific">Aspergillus fumigatus (strain CBS 144.89 / FGSC A1163 / CEA10)</name>
    <name type="common">Neosartorya fumigata</name>
    <dbReference type="NCBI Taxonomy" id="451804"/>
    <lineage>
        <taxon>Eukaryota</taxon>
        <taxon>Fungi</taxon>
        <taxon>Dikarya</taxon>
        <taxon>Ascomycota</taxon>
        <taxon>Pezizomycotina</taxon>
        <taxon>Eurotiomycetes</taxon>
        <taxon>Eurotiomycetidae</taxon>
        <taxon>Eurotiales</taxon>
        <taxon>Aspergillaceae</taxon>
        <taxon>Aspergillus</taxon>
        <taxon>Aspergillus subgen. Fumigati</taxon>
    </lineage>
</organism>
<sequence>MPADYTSTARALSLPMSPAESLSPAEEDTRPLWSHLASSRRNTASPSVRESTGLRDQVVNQATKMLRRTKKTWRRLTFWQRIGAIGAALLAILLGLSFMIFTGQVFFWLGPVAEKWEQSWLAFFVLWLCVFFVSFPPLVGWSTFGTISGFIYGIWKGWILYATATVLGSTCSFIVSRTILSKFVNRMMERDKRFAALALTLKYDGLKLLCMIRLCPLPYSVCNGAVSTFPTVHPLMYGLATALITPKLLVPAFIGSRIRILSEKNEEMSAASKAVNICSIILTIGIGVFTGWYIYRRTLARAKELEAKERADIRRSLQADHAAHRPHGSFSEDPDVNTAATTLARDEEERIGFNDFDDDNVDLVIDDDSGSEISPNLTKKQFPGPYRDEFTDNDSDVFGDGDGPDSQMFRLHTHVRSG</sequence>
<keyword id="KW-0333">Golgi apparatus</keyword>
<keyword id="KW-0472">Membrane</keyword>
<keyword id="KW-0812">Transmembrane</keyword>
<keyword id="KW-1133">Transmembrane helix</keyword>
<dbReference type="EMBL" id="DS499598">
    <property type="protein sequence ID" value="EDP50654.1"/>
    <property type="molecule type" value="Genomic_DNA"/>
</dbReference>
<dbReference type="EnsemblFungi" id="EDP50654">
    <property type="protein sequence ID" value="EDP50654"/>
    <property type="gene ID" value="AFUB_069910"/>
</dbReference>
<dbReference type="VEuPathDB" id="FungiDB:AFUB_069910"/>
<dbReference type="HOGENOM" id="CLU_041954_0_0_1"/>
<dbReference type="OrthoDB" id="94616at5052"/>
<dbReference type="PhylomeDB" id="B0Y4Q5"/>
<dbReference type="Proteomes" id="UP000001699">
    <property type="component" value="Unassembled WGS sequence"/>
</dbReference>
<dbReference type="GO" id="GO:0000139">
    <property type="term" value="C:Golgi membrane"/>
    <property type="evidence" value="ECO:0007669"/>
    <property type="project" value="UniProtKB-SubCell"/>
</dbReference>
<dbReference type="GO" id="GO:0000022">
    <property type="term" value="P:mitotic spindle elongation"/>
    <property type="evidence" value="ECO:0007669"/>
    <property type="project" value="TreeGrafter"/>
</dbReference>
<dbReference type="GO" id="GO:0016192">
    <property type="term" value="P:vesicle-mediated transport"/>
    <property type="evidence" value="ECO:0007669"/>
    <property type="project" value="TreeGrafter"/>
</dbReference>
<dbReference type="InterPro" id="IPR051076">
    <property type="entry name" value="Golgi_membrane_TVP38/TMEM64"/>
</dbReference>
<dbReference type="InterPro" id="IPR032816">
    <property type="entry name" value="VTT_dom"/>
</dbReference>
<dbReference type="PANTHER" id="PTHR47549:SF1">
    <property type="entry name" value="GOLGI APPARATUS MEMBRANE PROTEIN TVP38"/>
    <property type="match status" value="1"/>
</dbReference>
<dbReference type="PANTHER" id="PTHR47549">
    <property type="entry name" value="GOLGI APPARATUS MEMBRANE PROTEIN TVP38-RELATED"/>
    <property type="match status" value="1"/>
</dbReference>
<dbReference type="Pfam" id="PF09335">
    <property type="entry name" value="VTT_dom"/>
    <property type="match status" value="1"/>
</dbReference>